<feature type="chain" id="PRO_0000079598" description="Pre-mRNA-splicing factor cwc26">
    <location>
        <begin position="1"/>
        <end position="344"/>
    </location>
</feature>
<feature type="region of interest" description="Disordered" evidence="3">
    <location>
        <begin position="14"/>
        <end position="189"/>
    </location>
</feature>
<feature type="region of interest" description="Disordered" evidence="3">
    <location>
        <begin position="211"/>
        <end position="242"/>
    </location>
</feature>
<feature type="coiled-coil region" evidence="2">
    <location>
        <begin position="156"/>
        <end position="246"/>
    </location>
</feature>
<feature type="compositionally biased region" description="Low complexity" evidence="3">
    <location>
        <begin position="106"/>
        <end position="116"/>
    </location>
</feature>
<feature type="compositionally biased region" description="Acidic residues" evidence="3">
    <location>
        <begin position="124"/>
        <end position="142"/>
    </location>
</feature>
<feature type="compositionally biased region" description="Basic and acidic residues" evidence="3">
    <location>
        <begin position="168"/>
        <end position="189"/>
    </location>
</feature>
<feature type="compositionally biased region" description="Basic and acidic residues" evidence="3">
    <location>
        <begin position="211"/>
        <end position="223"/>
    </location>
</feature>
<feature type="compositionally biased region" description="Basic and acidic residues" evidence="3">
    <location>
        <begin position="231"/>
        <end position="241"/>
    </location>
</feature>
<keyword id="KW-0175">Coiled coil</keyword>
<keyword id="KW-0963">Cytoplasm</keyword>
<keyword id="KW-0507">mRNA processing</keyword>
<keyword id="KW-0508">mRNA splicing</keyword>
<keyword id="KW-0539">Nucleus</keyword>
<keyword id="KW-1185">Reference proteome</keyword>
<keyword id="KW-0747">Spliceosome</keyword>
<evidence type="ECO:0000250" key="1"/>
<evidence type="ECO:0000255" key="2"/>
<evidence type="ECO:0000256" key="3">
    <source>
        <dbReference type="SAM" id="MobiDB-lite"/>
    </source>
</evidence>
<evidence type="ECO:0000305" key="4"/>
<protein>
    <recommendedName>
        <fullName>Pre-mRNA-splicing factor cwc26</fullName>
    </recommendedName>
</protein>
<accession>Q4W9Z9</accession>
<name>CWC26_ASPFU</name>
<dbReference type="EMBL" id="AAHF01000016">
    <property type="protein sequence ID" value="EAL84464.1"/>
    <property type="molecule type" value="Genomic_DNA"/>
</dbReference>
<dbReference type="RefSeq" id="XP_746502.1">
    <property type="nucleotide sequence ID" value="XM_741409.1"/>
</dbReference>
<dbReference type="SMR" id="Q4W9Z9"/>
<dbReference type="STRING" id="330879.Q4W9Z9"/>
<dbReference type="EnsemblFungi" id="EAL84464">
    <property type="protein sequence ID" value="EAL84464"/>
    <property type="gene ID" value="AFUA_4G03160"/>
</dbReference>
<dbReference type="GeneID" id="3504064"/>
<dbReference type="KEGG" id="afm:AFUA_4G03160"/>
<dbReference type="VEuPathDB" id="FungiDB:Afu4g03160"/>
<dbReference type="eggNOG" id="KOG2654">
    <property type="taxonomic scope" value="Eukaryota"/>
</dbReference>
<dbReference type="HOGENOM" id="CLU_024195_0_0_1"/>
<dbReference type="InParanoid" id="Q4W9Z9"/>
<dbReference type="OMA" id="GDVQRQE"/>
<dbReference type="OrthoDB" id="6022at2759"/>
<dbReference type="Proteomes" id="UP000002530">
    <property type="component" value="Chromosome 4"/>
</dbReference>
<dbReference type="GO" id="GO:0005737">
    <property type="term" value="C:cytoplasm"/>
    <property type="evidence" value="ECO:0007669"/>
    <property type="project" value="UniProtKB-SubCell"/>
</dbReference>
<dbReference type="GO" id="GO:0000974">
    <property type="term" value="C:Prp19 complex"/>
    <property type="evidence" value="ECO:0007669"/>
    <property type="project" value="EnsemblFungi"/>
</dbReference>
<dbReference type="GO" id="GO:0005684">
    <property type="term" value="C:U2-type spliceosomal complex"/>
    <property type="evidence" value="ECO:0000318"/>
    <property type="project" value="GO_Central"/>
</dbReference>
<dbReference type="GO" id="GO:0000398">
    <property type="term" value="P:mRNA splicing, via spliceosome"/>
    <property type="evidence" value="ECO:0000318"/>
    <property type="project" value="GO_Central"/>
</dbReference>
<dbReference type="InterPro" id="IPR018609">
    <property type="entry name" value="Bud13"/>
</dbReference>
<dbReference type="InterPro" id="IPR051112">
    <property type="entry name" value="CWC26_splicing_factor"/>
</dbReference>
<dbReference type="PANTHER" id="PTHR31809">
    <property type="entry name" value="BUD13 HOMOLOG"/>
    <property type="match status" value="1"/>
</dbReference>
<dbReference type="PANTHER" id="PTHR31809:SF0">
    <property type="entry name" value="BUD13 HOMOLOG"/>
    <property type="match status" value="1"/>
</dbReference>
<dbReference type="Pfam" id="PF09736">
    <property type="entry name" value="Bud13"/>
    <property type="match status" value="1"/>
</dbReference>
<organism>
    <name type="scientific">Aspergillus fumigatus (strain ATCC MYA-4609 / CBS 101355 / FGSC A1100 / Af293)</name>
    <name type="common">Neosartorya fumigata</name>
    <dbReference type="NCBI Taxonomy" id="330879"/>
    <lineage>
        <taxon>Eukaryota</taxon>
        <taxon>Fungi</taxon>
        <taxon>Dikarya</taxon>
        <taxon>Ascomycota</taxon>
        <taxon>Pezizomycotina</taxon>
        <taxon>Eurotiomycetes</taxon>
        <taxon>Eurotiomycetidae</taxon>
        <taxon>Eurotiales</taxon>
        <taxon>Aspergillaceae</taxon>
        <taxon>Aspergillus</taxon>
        <taxon>Aspergillus subgen. Fumigati</taxon>
    </lineage>
</organism>
<sequence length="344" mass="37806">MPPSSLAEYLAKKYLTADPATDRPKKKRKKTKTVDTAGDGLIIADDDPPDLRTSATNFDNEDDEGPSLVTSVRSAEFRRAKKSNWRTVGGPATGSSNANDERDAADAILASAAAESAARRGEGEGGDDEAPAVVDEADADDGGELRMESGARAGLQTAEQTAAMVAAQERRKKAEAARHRERPAEAQETIYRDASGRIINVALKRAEARRAEQEKREKEEAAKEALMGDVQRAEREARRQQIQEARAMPLARTIEDDALNEELKAQQRWNDPAAGFLTKTKGPGVSVTGKPLYKGAFQPNRYGIRPGHRWDGVDRGNGFEKEWFAARNKKGRLEALDYQWQMDE</sequence>
<reference key="1">
    <citation type="journal article" date="2005" name="Nature">
        <title>Genomic sequence of the pathogenic and allergenic filamentous fungus Aspergillus fumigatus.</title>
        <authorList>
            <person name="Nierman W.C."/>
            <person name="Pain A."/>
            <person name="Anderson M.J."/>
            <person name="Wortman J.R."/>
            <person name="Kim H.S."/>
            <person name="Arroyo J."/>
            <person name="Berriman M."/>
            <person name="Abe K."/>
            <person name="Archer D.B."/>
            <person name="Bermejo C."/>
            <person name="Bennett J.W."/>
            <person name="Bowyer P."/>
            <person name="Chen D."/>
            <person name="Collins M."/>
            <person name="Coulsen R."/>
            <person name="Davies R."/>
            <person name="Dyer P.S."/>
            <person name="Farman M.L."/>
            <person name="Fedorova N."/>
            <person name="Fedorova N.D."/>
            <person name="Feldblyum T.V."/>
            <person name="Fischer R."/>
            <person name="Fosker N."/>
            <person name="Fraser A."/>
            <person name="Garcia J.L."/>
            <person name="Garcia M.J."/>
            <person name="Goble A."/>
            <person name="Goldman G.H."/>
            <person name="Gomi K."/>
            <person name="Griffith-Jones S."/>
            <person name="Gwilliam R."/>
            <person name="Haas B.J."/>
            <person name="Haas H."/>
            <person name="Harris D.E."/>
            <person name="Horiuchi H."/>
            <person name="Huang J."/>
            <person name="Humphray S."/>
            <person name="Jimenez J."/>
            <person name="Keller N."/>
            <person name="Khouri H."/>
            <person name="Kitamoto K."/>
            <person name="Kobayashi T."/>
            <person name="Konzack S."/>
            <person name="Kulkarni R."/>
            <person name="Kumagai T."/>
            <person name="Lafton A."/>
            <person name="Latge J.-P."/>
            <person name="Li W."/>
            <person name="Lord A."/>
            <person name="Lu C."/>
            <person name="Majoros W.H."/>
            <person name="May G.S."/>
            <person name="Miller B.L."/>
            <person name="Mohamoud Y."/>
            <person name="Molina M."/>
            <person name="Monod M."/>
            <person name="Mouyna I."/>
            <person name="Mulligan S."/>
            <person name="Murphy L.D."/>
            <person name="O'Neil S."/>
            <person name="Paulsen I."/>
            <person name="Penalva M.A."/>
            <person name="Pertea M."/>
            <person name="Price C."/>
            <person name="Pritchard B.L."/>
            <person name="Quail M.A."/>
            <person name="Rabbinowitsch E."/>
            <person name="Rawlins N."/>
            <person name="Rajandream M.A."/>
            <person name="Reichard U."/>
            <person name="Renauld H."/>
            <person name="Robson G.D."/>
            <person name="Rodriguez de Cordoba S."/>
            <person name="Rodriguez-Pena J.M."/>
            <person name="Ronning C.M."/>
            <person name="Rutter S."/>
            <person name="Salzberg S.L."/>
            <person name="Sanchez M."/>
            <person name="Sanchez-Ferrero J.C."/>
            <person name="Saunders D."/>
            <person name="Seeger K."/>
            <person name="Squares R."/>
            <person name="Squares S."/>
            <person name="Takeuchi M."/>
            <person name="Tekaia F."/>
            <person name="Turner G."/>
            <person name="Vazquez de Aldana C.R."/>
            <person name="Weidman J."/>
            <person name="White O."/>
            <person name="Woodward J.R."/>
            <person name="Yu J.-H."/>
            <person name="Fraser C.M."/>
            <person name="Galagan J.E."/>
            <person name="Asai K."/>
            <person name="Machida M."/>
            <person name="Hall N."/>
            <person name="Barrell B.G."/>
            <person name="Denning D.W."/>
        </authorList>
    </citation>
    <scope>NUCLEOTIDE SEQUENCE [LARGE SCALE GENOMIC DNA]</scope>
    <source>
        <strain>ATCC MYA-4609 / CBS 101355 / FGSC A1100 / Af293</strain>
    </source>
</reference>
<proteinExistence type="inferred from homology"/>
<comment type="function">
    <text evidence="1">Involved in pre-mRNA splicing.</text>
</comment>
<comment type="subunit">
    <text evidence="1">Associated with the spliceosome.</text>
</comment>
<comment type="subcellular location">
    <subcellularLocation>
        <location evidence="1">Cytoplasm</location>
    </subcellularLocation>
    <subcellularLocation>
        <location evidence="1">Nucleus</location>
    </subcellularLocation>
</comment>
<comment type="similarity">
    <text evidence="4">Belongs to the CWC26 family.</text>
</comment>
<gene>
    <name type="primary">cwc26</name>
    <name type="ORF">AFUA_4G03160</name>
</gene>